<accession>A0A348G5V9</accession>
<evidence type="ECO:0000250" key="1">
    <source>
        <dbReference type="UniProtKB" id="A0A348G5W2"/>
    </source>
</evidence>
<evidence type="ECO:0000255" key="2"/>
<evidence type="ECO:0000269" key="3">
    <source>
    </source>
</evidence>
<evidence type="ECO:0000269" key="4">
    <source>
    </source>
</evidence>
<evidence type="ECO:0000303" key="5">
    <source>
    </source>
</evidence>
<evidence type="ECO:0000305" key="6"/>
<evidence type="ECO:0000305" key="7">
    <source>
    </source>
</evidence>
<evidence type="ECO:0000305" key="8">
    <source>
    </source>
</evidence>
<evidence type="ECO:0000312" key="9">
    <source>
        <dbReference type="EMBL" id="BBF97832.1"/>
    </source>
</evidence>
<comment type="function">
    <text evidence="4">Cationic amphipathic alpha-helical peptide with antimicrobial activities against E.coli (MIC=3.1 uM), S.aureus (MIC=25 uM), and S.cerevisiae (MIC=50 uM). Also shows histamine-releasing activity (37.5% at 10 uM). Does not show hemolytic activity, even at 50 uM.</text>
</comment>
<comment type="subcellular location">
    <subcellularLocation>
        <location evidence="3 4">Secreted</location>
    </subcellularLocation>
</comment>
<comment type="tissue specificity">
    <text evidence="7">Expressed by the venom gland.</text>
</comment>
<comment type="PTM">
    <text evidence="7 8">Truncated sequences of this peptide have also been found in the venom. It is possible they have been cleaved in the venom.</text>
</comment>
<comment type="mass spectrometry" mass="4101.244" method="Electrospray" evidence="3">
    <text>Monoisotopic mass.</text>
</comment>
<comment type="similarity">
    <text evidence="6">Belongs to the formicidae venom precursor-01 superfamily.</text>
</comment>
<protein>
    <recommendedName>
        <fullName evidence="1">U-poneritoxin(01)-Om3a</fullName>
        <shortName evidence="1">U-PONTX(01)-Om3a</shortName>
    </recommendedName>
    <alternativeName>
        <fullName evidence="9">Pilosulin-like peptide 3</fullName>
        <shortName evidence="5">PLP3</shortName>
    </alternativeName>
    <alternativeName>
        <fullName evidence="6">Poneratoxin</fullName>
    </alternativeName>
</protein>
<reference key="1">
    <citation type="journal article" date="2017" name="Toxins">
        <title>Combined venom gland transcriptomic and venom peptidomic analysis of the predatory ant Odontomachus monticola.</title>
        <authorList>
            <person name="Kazuma K."/>
            <person name="Masuko K."/>
            <person name="Konno K."/>
            <person name="Inagaki H."/>
        </authorList>
    </citation>
    <scope>NUCLEOTIDE SEQUENCE [MRNA]</scope>
    <scope>PROTEIN SEQUENCE OF 56-79</scope>
    <scope>MASS SPECTROMETRY</scope>
    <scope>SUBCELLULAR LOCATION</scope>
    <source>
        <tissue>Venom</tissue>
        <tissue>Venom gland</tissue>
    </source>
</reference>
<reference key="2">
    <citation type="journal article" date="2019" name="Toxins">
        <title>Mass spectrometry analysis and biological characterization of the predatory ant Odontomachus monticola venom and venom sac components.</title>
        <authorList>
            <person name="Tani N."/>
            <person name="Kazuma K."/>
            <person name="Ohtsuka Y."/>
            <person name="Shigeri Y."/>
            <person name="Masuko K."/>
            <person name="Konno K."/>
            <person name="Inagaki H."/>
        </authorList>
    </citation>
    <scope>FUNCTION</scope>
    <scope>IDENTIFICATION BY MASS SPECTROMETRY</scope>
    <scope>SYNTHESIS OF PEPTIDE WITH UNKNOWN TERMINAL RESIDUES</scope>
    <scope>SUBCELLULAR LOCATION</scope>
    <source>
        <tissue>Venom</tissue>
    </source>
</reference>
<proteinExistence type="evidence at protein level"/>
<organism>
    <name type="scientific">Odontomachus monticola</name>
    <name type="common">Trap-jaw ant</name>
    <dbReference type="NCBI Taxonomy" id="613454"/>
    <lineage>
        <taxon>Eukaryota</taxon>
        <taxon>Metazoa</taxon>
        <taxon>Ecdysozoa</taxon>
        <taxon>Arthropoda</taxon>
        <taxon>Hexapoda</taxon>
        <taxon>Insecta</taxon>
        <taxon>Pterygota</taxon>
        <taxon>Neoptera</taxon>
        <taxon>Endopterygota</taxon>
        <taxon>Hymenoptera</taxon>
        <taxon>Apocrita</taxon>
        <taxon>Aculeata</taxon>
        <taxon>Formicoidea</taxon>
        <taxon>Formicidae</taxon>
        <taxon>Ponerinae</taxon>
        <taxon>Ponerini</taxon>
        <taxon>Odontomachus</taxon>
    </lineage>
</organism>
<sequence length="80" mass="8231">MKPSGLALAFLVVFMMAIMYNSVQAAAIADADAEAEAIAKIKWGKIFKKGGKLIGKTALEAAANAAASEAISAMASQNEK</sequence>
<feature type="signal peptide" evidence="2">
    <location>
        <begin position="1"/>
        <end position="25"/>
    </location>
</feature>
<feature type="propeptide" id="PRO_0000447071" evidence="7">
    <location>
        <begin position="26"/>
        <end position="39"/>
    </location>
</feature>
<feature type="peptide" id="PRO_5016765771" description="U-poneritoxin(01)-Om3a" evidence="4">
    <location>
        <begin position="40"/>
        <end position="79"/>
    </location>
</feature>
<name>TX13A_ODOMO</name>
<keyword id="KW-0044">Antibiotic</keyword>
<keyword id="KW-0929">Antimicrobial</keyword>
<keyword id="KW-0903">Direct protein sequencing</keyword>
<keyword id="KW-0964">Secreted</keyword>
<keyword id="KW-0732">Signal</keyword>
<dbReference type="EMBL" id="FX985496">
    <property type="protein sequence ID" value="BBF97832.1"/>
    <property type="molecule type" value="mRNA"/>
</dbReference>
<dbReference type="GO" id="GO:0005576">
    <property type="term" value="C:extracellular region"/>
    <property type="evidence" value="ECO:0007669"/>
    <property type="project" value="UniProtKB-SubCell"/>
</dbReference>
<dbReference type="GO" id="GO:0042742">
    <property type="term" value="P:defense response to bacterium"/>
    <property type="evidence" value="ECO:0007669"/>
    <property type="project" value="UniProtKB-KW"/>
</dbReference>